<reference key="1">
    <citation type="journal article" date="2015" name="Biotechnol. Biofuels">
        <title>Genetic basis of the highly efficient yeast Kluyveromyces marxianus: complete genome sequence and transcriptome analyses.</title>
        <authorList>
            <person name="Lertwattanasakul N."/>
            <person name="Kosaka T."/>
            <person name="Hosoyama A."/>
            <person name="Suzuki Y."/>
            <person name="Rodrussamee N."/>
            <person name="Matsutani M."/>
            <person name="Murata M."/>
            <person name="Fujimoto N."/>
            <person name="Suprayogi X."/>
            <person name="Tsuchikane K."/>
            <person name="Limtong S."/>
            <person name="Fujita N."/>
            <person name="Yamada M."/>
        </authorList>
    </citation>
    <scope>NUCLEOTIDE SEQUENCE [LARGE SCALE GENOMIC DNA]</scope>
    <source>
        <strain>DMKU3-1042 / BCC 29191 / NBRC 104275</strain>
    </source>
</reference>
<reference key="2">
    <citation type="journal article" date="2015" name="J. Biol. Chem.">
        <title>The thermotolerant yeast Kluyveromyces marxianus is a useful organism for structural and biochemical studies of autophagy.</title>
        <authorList>
            <person name="Yamamoto H."/>
            <person name="Shima T."/>
            <person name="Yamaguchi M."/>
            <person name="Mochizuki Y."/>
            <person name="Hoshida H."/>
            <person name="Kakuta S."/>
            <person name="Kondo-Kakuta C."/>
            <person name="Noda N.N."/>
            <person name="Inagaki F."/>
            <person name="Itoh T."/>
            <person name="Akada R."/>
            <person name="Ohsumi Y."/>
        </authorList>
    </citation>
    <scope>IDENTIFICATION</scope>
    <scope>FUNCTION</scope>
    <scope>DISRUPTION PHENOTYPE</scope>
    <scope>SUBCELLULAR LOCATION</scope>
    <scope>MUTAGENESIS OF GLY-116 AND 117-GLY--LYS-124</scope>
</reference>
<gene>
    <name evidence="3" type="primary">ATG8</name>
    <name type="ORF">KLMA_80372</name>
</gene>
<organism>
    <name type="scientific">Kluyveromyces marxianus (strain DMKU3-1042 / BCC 29191 / NBRC 104275)</name>
    <name type="common">Yeast</name>
    <name type="synonym">Candida kefyr</name>
    <dbReference type="NCBI Taxonomy" id="1003335"/>
    <lineage>
        <taxon>Eukaryota</taxon>
        <taxon>Fungi</taxon>
        <taxon>Dikarya</taxon>
        <taxon>Ascomycota</taxon>
        <taxon>Saccharomycotina</taxon>
        <taxon>Saccharomycetes</taxon>
        <taxon>Saccharomycetales</taxon>
        <taxon>Saccharomycetaceae</taxon>
        <taxon>Kluyveromyces</taxon>
    </lineage>
</organism>
<accession>W0THY6</accession>
<dbReference type="EMBL" id="AP012220">
    <property type="protein sequence ID" value="BAO42683.1"/>
    <property type="molecule type" value="Genomic_DNA"/>
</dbReference>
<dbReference type="RefSeq" id="XP_022678417.1">
    <property type="nucleotide sequence ID" value="XM_022822124.1"/>
</dbReference>
<dbReference type="SMR" id="W0THY6"/>
<dbReference type="GeneID" id="34718560"/>
<dbReference type="VEuPathDB" id="FungiDB:KLMA_80372"/>
<dbReference type="OrthoDB" id="6738456at2759"/>
<dbReference type="Proteomes" id="UP000065495">
    <property type="component" value="Chromosome 8"/>
</dbReference>
<dbReference type="GO" id="GO:0000421">
    <property type="term" value="C:autophagosome membrane"/>
    <property type="evidence" value="ECO:0007669"/>
    <property type="project" value="UniProtKB-SubCell"/>
</dbReference>
<dbReference type="GO" id="GO:0033110">
    <property type="term" value="C:Cvt vesicle membrane"/>
    <property type="evidence" value="ECO:0007669"/>
    <property type="project" value="UniProtKB-SubCell"/>
</dbReference>
<dbReference type="GO" id="GO:0006914">
    <property type="term" value="P:autophagy"/>
    <property type="evidence" value="ECO:0007669"/>
    <property type="project" value="UniProtKB-KW"/>
</dbReference>
<dbReference type="GO" id="GO:0015031">
    <property type="term" value="P:protein transport"/>
    <property type="evidence" value="ECO:0007669"/>
    <property type="project" value="UniProtKB-KW"/>
</dbReference>
<dbReference type="CDD" id="cd16128">
    <property type="entry name" value="Ubl_ATG8"/>
    <property type="match status" value="1"/>
</dbReference>
<dbReference type="FunFam" id="3.10.20.90:FF:000010">
    <property type="entry name" value="Autophagy-related protein"/>
    <property type="match status" value="1"/>
</dbReference>
<dbReference type="Gene3D" id="3.10.20.90">
    <property type="entry name" value="Phosphatidylinositol 3-kinase Catalytic Subunit, Chain A, domain 1"/>
    <property type="match status" value="1"/>
</dbReference>
<dbReference type="InterPro" id="IPR004241">
    <property type="entry name" value="Atg8-like"/>
</dbReference>
<dbReference type="InterPro" id="IPR029071">
    <property type="entry name" value="Ubiquitin-like_domsf"/>
</dbReference>
<dbReference type="PANTHER" id="PTHR10969">
    <property type="entry name" value="MICROTUBULE-ASSOCIATED PROTEINS 1A/1B LIGHT CHAIN 3-RELATED"/>
    <property type="match status" value="1"/>
</dbReference>
<dbReference type="Pfam" id="PF02991">
    <property type="entry name" value="ATG8"/>
    <property type="match status" value="1"/>
</dbReference>
<dbReference type="SUPFAM" id="SSF54236">
    <property type="entry name" value="Ubiquitin-like"/>
    <property type="match status" value="1"/>
</dbReference>
<protein>
    <recommendedName>
        <fullName evidence="3">Autophagy-related protein 8</fullName>
    </recommendedName>
    <alternativeName>
        <fullName evidence="1">Autophagy-related ubiquitin-like modifier ATG8</fullName>
    </alternativeName>
</protein>
<name>ATG8_KLUMD</name>
<proteinExistence type="evidence at protein level"/>
<keyword id="KW-0072">Autophagy</keyword>
<keyword id="KW-0968">Cytoplasmic vesicle</keyword>
<keyword id="KW-0449">Lipoprotein</keyword>
<keyword id="KW-0472">Membrane</keyword>
<keyword id="KW-0653">Protein transport</keyword>
<keyword id="KW-0813">Transport</keyword>
<keyword id="KW-0926">Vacuole</keyword>
<evidence type="ECO:0000250" key="1">
    <source>
        <dbReference type="UniProtKB" id="P38182"/>
    </source>
</evidence>
<evidence type="ECO:0000269" key="2">
    <source>
    </source>
</evidence>
<evidence type="ECO:0000303" key="3">
    <source>
    </source>
</evidence>
<evidence type="ECO:0000305" key="4"/>
<evidence type="ECO:0000305" key="5">
    <source>
    </source>
</evidence>
<feature type="chain" id="PRO_0000443891" description="Autophagy-related protein 8">
    <location>
        <begin position="1"/>
        <end position="124"/>
    </location>
</feature>
<feature type="propeptide" id="PRO_0000443892" description="Removed in mature form" evidence="1">
    <location>
        <begin position="117"/>
        <end position="124"/>
    </location>
</feature>
<feature type="site" description="Cleavage; by ATG4" evidence="1 5">
    <location>
        <begin position="116"/>
        <end position="117"/>
    </location>
</feature>
<feature type="lipid moiety-binding region" description="Phosphatidylethanolamine amidated glycine" evidence="1">
    <location>
        <position position="116"/>
    </location>
</feature>
<feature type="mutagenesis site" description="In Atg8FA; prevents conjugation with phosphatidylethanolamine (PE) and impairs the correct localization to autophagic membranes." evidence="2">
    <original>G</original>
    <variation>A</variation>
    <location>
        <position position="116"/>
    </location>
</feature>
<feature type="mutagenesis site" description="In Atg8FG; bypasses the requirement for cleavage by ATG4 to be localized to autophagic membranes." evidence="2">
    <location>
        <begin position="117"/>
        <end position="124"/>
    </location>
</feature>
<comment type="function">
    <text evidence="1 2">Ubiquitin-like modifier involved in cytoplasm to vacuole transport (Cvt) vesicles and autophagosome formation (PubMed:26442587). With ATG4, mediates the delivery of the vesicles and autophagosomes to the vacuole via the microtubule cytoskeleton (By similarity). Required for selective autophagic degradation of the nucleus (nucleophagy) as well as for mitophagy which contributes to regulate mitochondrial quantity and quality by eliminating the mitochondria to a basal level to fulfill cellular energy requirements and preventing excess ROS production (By similarity). Also participates in membrane fusion events that take place in the early secretory pathway (By similarity). Also involved in endoplasmic reticulum-specific autophagic process and is essential for the survival of cells subjected to severe ER stress (By similarity). The ATG8-PE conjugate mediates tethering between adjacent membranes and stimulates membrane hemifusion, leading to expansion of the autophagosomal membrane during autophagy (By similarity). Moreover not only conjugation, but also subsequent ATG8-PE deconjugation is an important step required to facilitate multiple events during macroautophagy, and especially for efficient autophagosome biogenesis, the assembly of ATG9-containing tubulovesicular clusters into phagophores/autophagosomes, and for the disassembly of PAS-associated ATG components (By similarity).</text>
</comment>
<comment type="subunit">
    <text evidence="1">Conjugation to phosphatidylethanolamine (PE) leads to homodimerization (By similarity). Interacts with ATG1, ATG3, ATG4, ATG7 and ATG12 (By similarity).</text>
</comment>
<comment type="subcellular location">
    <subcellularLocation>
        <location evidence="1">Cytoplasmic vesicle</location>
        <location evidence="1">Cvt vesicle membrane</location>
        <topology evidence="1">Lipid-anchor</topology>
    </subcellularLocation>
    <subcellularLocation>
        <location evidence="1">Cytoplasmic vesicle</location>
        <location evidence="1">Autophagosome membrane</location>
        <topology evidence="1">Lipid-anchor</topology>
    </subcellularLocation>
    <subcellularLocation>
        <location evidence="2">Vacuole membrane</location>
        <topology evidence="1">Lipid-anchor</topology>
    </subcellularLocation>
    <text evidence="1 2">Membrane-associated through a lipid anchor (By similarity). This association needs the 2 ubiquitin-like systems required for cytoplasm to vacuole transport and autophagy (By similarity). Localizes to both the isolation membrane (IM) and the vacuole-isolation membrane contact site (VICS) during IM expansion (By similarity). The IM is a membrane sac generated from the pre-autophagosomal structure that ultimately expands to become a mature autophagosome (By similarity). Accumulates atperivacuolar sites under high temperature conditions (PubMed:26442587).</text>
</comment>
<comment type="PTM">
    <text evidence="1">The C-terminal 8 residues of ATG8 are removed by ATG4 to expose Gly-116 at the C-terminus (By similarity). This Gly-116 forms then a thioester bond with the 'Cys-550' of ATG7 (E1-like activating enzyme) before being transferred to the 'Cys-244' of ATG3 (the specific E2 conjugating enzyme), in order to be finally amidated with phosphatidylethanolamine (By similarity). This lipid modification anchors ATG8 to membranes and can be reversed by ATG4, releasing soluble ATG8 (By similarity).</text>
</comment>
<comment type="disruption phenotype">
    <text evidence="2">Blocks autophagic activity by impairing the formation of autophagic bodies (PubMed:26442587).</text>
</comment>
<comment type="miscellaneous">
    <text evidence="2">Kluyveromyces marxianus proteins are shorter in length and have a more ordered secondary structure than their S.cerevisiae counterparts, which might contribute to the superior thermotolerance and solubility (PubMed:26442587). K.marxianus could be therefore useful as a new model organism for further elucidation of the molecular details of autophagy (PubMed:26442587).</text>
</comment>
<comment type="similarity">
    <text evidence="4">Belongs to the ATG8 family.</text>
</comment>
<sequence>MKSAFKSEFPFEKRKAESERIVQKFHNRIPVICERGGKSDIPDIDKRKYLVPGDLTVGQFVYVIRKRIKLPAEKAIFIFVNDTLPPTAALMSSIYQHHKDKDGFLYVSYSSENTFGGAGPLLEK</sequence>